<comment type="function">
    <text evidence="2">Involved in the biosynthesis of ent-kaurene diterpenoids natural products (PubMed:17456599). Catalyzes the conversion of ent-copalyl diphosphate to the phytoalexin precursor ent-isokaur-15-ene (PubMed:17456599).</text>
</comment>
<comment type="catalytic activity">
    <reaction evidence="2">
        <text>ent-copalyl diphosphate = ent-isokaurene + diphosphate</text>
        <dbReference type="Rhea" id="RHEA:25759"/>
        <dbReference type="ChEBI" id="CHEBI:33019"/>
        <dbReference type="ChEBI" id="CHEBI:50783"/>
        <dbReference type="ChEBI" id="CHEBI:58553"/>
        <dbReference type="EC" id="4.2.3.103"/>
    </reaction>
    <physiologicalReaction direction="left-to-right" evidence="2">
        <dbReference type="Rhea" id="RHEA:25760"/>
    </physiologicalReaction>
</comment>
<comment type="cofactor">
    <cofactor evidence="1">
        <name>Mg(2+)</name>
        <dbReference type="ChEBI" id="CHEBI:18420"/>
    </cofactor>
    <text evidence="1">Binds 3 Mg(2+) ions per subunit.</text>
</comment>
<comment type="pathway">
    <text evidence="2">Secondary metabolite biosynthesis; terpenoid biosynthesis.</text>
</comment>
<comment type="domain">
    <text evidence="4">The Asp-Asp-Xaa-Xaa-Asp/Glu (DDXXD/E) motif is important for the catalytic activity, presumably through binding to Mg(2+).</text>
</comment>
<comment type="miscellaneous">
    <text>Phytoalexins are diterpenoid secondary metabolites involved in the defense mechanism of the plant and produced in response to attack (by a pathogen, elicitor or UV irradiation).</text>
</comment>
<comment type="similarity">
    <text evidence="4">Belongs to the terpene synthase family.</text>
</comment>
<comment type="sequence caution" evidence="4">
    <conflict type="erroneous gene model prediction">
        <sequence resource="EMBL-CDS" id="EEC73447"/>
    </conflict>
</comment>
<proteinExistence type="evidence at protein level"/>
<sequence length="821" mass="92514">MILPMSSACLGQFLRASPRGMIEQFNRAPPLRVSIRGAAGVEKSLGLGRNAGSQQGMQKNQLQDKIRKQLREVQLSPSSYDTAWVAMVPVQGSHQTPRFPQCIEWIMQNQHDDGSWGTNLPGSVVNKDILLCTLACVVALKRWNTGRDHISRGLNFIGKNFWVAMDEQTIAPVGFNITFSGLLNLATGTGLEFPVMQTDIDGIFHMRKIELERDAYGTASSRRAFMAYVSEGLDSLQDWDQVMAYQRKNRSIFNSPSATAATVIHGHNDSALCYLDSLVSKLHGPVPVMYPQNAYSQLCMVDTLEKMGISNNFSCEISDILDMIYRLWIHNEEELMLEMGTCAMAFRLLRMHGYDISSDGMAQFVEQSSFDDSIHGYLNDTKALLELYRSSQIRCLEDDLILQDIGSWSARVLQEKISSKMTHKSEMLGVEYALKFPVYATLERLEQKRNIEQFKTKEQLKIEGFKLLKSGYRGAITHDEILALAVDEFHSSQSVYQQELQDLNSWVAHTRLDELKFARLMPSITYFSAAATMFPSELSEARIAWTQNCILTTTVDDFFDGDGSKEEMENLVKLIKKWDGHGEIGFSSECVEILFYAIYNTSKQIAEKAVPLQKRNVVDHIAESWWFTVRGMLTEAEWRMDKYVPTTVEEYMSAAVDSFAVGPIITSAALFVGPELSEEVFRSEEYIHLMNLANTIGRLLNDMQTYEKEIKMGKVNSIMLHALSHSGGGRGSPEASMEEAKREMRRVLQGSRCDLLRLVTRDGGVVPPPCRKLFWFMSKVLHFVYMEKDGYFTADGMMASANAVILDPLQVTLLPSGLGTL</sequence>
<protein>
    <recommendedName>
        <fullName evidence="4">Ent-isokaur-15-ene synthase</fullName>
        <ecNumber evidence="2">4.2.3.103</ecNumber>
    </recommendedName>
    <alternativeName>
        <fullName evidence="3">Ent-kaurene synthase-like 5</fullName>
        <shortName evidence="3">OsKSL5i</shortName>
    </alternativeName>
    <alternativeName>
        <fullName evidence="4">Isokaurene synthase</fullName>
    </alternativeName>
</protein>
<evidence type="ECO:0000250" key="1">
    <source>
        <dbReference type="UniProtKB" id="Q40577"/>
    </source>
</evidence>
<evidence type="ECO:0000269" key="2">
    <source>
    </source>
</evidence>
<evidence type="ECO:0000303" key="3">
    <source>
    </source>
</evidence>
<evidence type="ECO:0000305" key="4"/>
<evidence type="ECO:0000312" key="5">
    <source>
        <dbReference type="EMBL" id="EEC73447.1"/>
    </source>
</evidence>
<reference key="1">
    <citation type="journal article" date="2007" name="Phytochemistry">
        <title>Functional characterization of the rice kaurene synthase-like gene family.</title>
        <authorList>
            <person name="Xu M."/>
            <person name="Wilderman P.R."/>
            <person name="Morrone D."/>
            <person name="Xu J."/>
            <person name="Roy A."/>
            <person name="Margis-Pinheiro M."/>
            <person name="Upadhyaya N.M."/>
            <person name="Coates R.M."/>
            <person name="Peters R.J."/>
        </authorList>
    </citation>
    <scope>NUCLEOTIDE SEQUENCE [MRNA]</scope>
    <source>
        <strain>cv. IR24</strain>
    </source>
</reference>
<reference key="2">
    <citation type="journal article" date="2005" name="PLoS Biol.">
        <title>The genomes of Oryza sativa: a history of duplications.</title>
        <authorList>
            <person name="Yu J."/>
            <person name="Wang J."/>
            <person name="Lin W."/>
            <person name="Li S."/>
            <person name="Li H."/>
            <person name="Zhou J."/>
            <person name="Ni P."/>
            <person name="Dong W."/>
            <person name="Hu S."/>
            <person name="Zeng C."/>
            <person name="Zhang J."/>
            <person name="Zhang Y."/>
            <person name="Li R."/>
            <person name="Xu Z."/>
            <person name="Li S."/>
            <person name="Li X."/>
            <person name="Zheng H."/>
            <person name="Cong L."/>
            <person name="Lin L."/>
            <person name="Yin J."/>
            <person name="Geng J."/>
            <person name="Li G."/>
            <person name="Shi J."/>
            <person name="Liu J."/>
            <person name="Lv H."/>
            <person name="Li J."/>
            <person name="Wang J."/>
            <person name="Deng Y."/>
            <person name="Ran L."/>
            <person name="Shi X."/>
            <person name="Wang X."/>
            <person name="Wu Q."/>
            <person name="Li C."/>
            <person name="Ren X."/>
            <person name="Wang J."/>
            <person name="Wang X."/>
            <person name="Li D."/>
            <person name="Liu D."/>
            <person name="Zhang X."/>
            <person name="Ji Z."/>
            <person name="Zhao W."/>
            <person name="Sun Y."/>
            <person name="Zhang Z."/>
            <person name="Bao J."/>
            <person name="Han Y."/>
            <person name="Dong L."/>
            <person name="Ji J."/>
            <person name="Chen P."/>
            <person name="Wu S."/>
            <person name="Liu J."/>
            <person name="Xiao Y."/>
            <person name="Bu D."/>
            <person name="Tan J."/>
            <person name="Yang L."/>
            <person name="Ye C."/>
            <person name="Zhang J."/>
            <person name="Xu J."/>
            <person name="Zhou Y."/>
            <person name="Yu Y."/>
            <person name="Zhang B."/>
            <person name="Zhuang S."/>
            <person name="Wei H."/>
            <person name="Liu B."/>
            <person name="Lei M."/>
            <person name="Yu H."/>
            <person name="Li Y."/>
            <person name="Xu H."/>
            <person name="Wei S."/>
            <person name="He X."/>
            <person name="Fang L."/>
            <person name="Zhang Z."/>
            <person name="Zhang Y."/>
            <person name="Huang X."/>
            <person name="Su Z."/>
            <person name="Tong W."/>
            <person name="Li J."/>
            <person name="Tong Z."/>
            <person name="Li S."/>
            <person name="Ye J."/>
            <person name="Wang L."/>
            <person name="Fang L."/>
            <person name="Lei T."/>
            <person name="Chen C.-S."/>
            <person name="Chen H.-C."/>
            <person name="Xu Z."/>
            <person name="Li H."/>
            <person name="Huang H."/>
            <person name="Zhang F."/>
            <person name="Xu H."/>
            <person name="Li N."/>
            <person name="Zhao C."/>
            <person name="Li S."/>
            <person name="Dong L."/>
            <person name="Huang Y."/>
            <person name="Li L."/>
            <person name="Xi Y."/>
            <person name="Qi Q."/>
            <person name="Li W."/>
            <person name="Zhang B."/>
            <person name="Hu W."/>
            <person name="Zhang Y."/>
            <person name="Tian X."/>
            <person name="Jiao Y."/>
            <person name="Liang X."/>
            <person name="Jin J."/>
            <person name="Gao L."/>
            <person name="Zheng W."/>
            <person name="Hao B."/>
            <person name="Liu S.-M."/>
            <person name="Wang W."/>
            <person name="Yuan L."/>
            <person name="Cao M."/>
            <person name="McDermott J."/>
            <person name="Samudrala R."/>
            <person name="Wang J."/>
            <person name="Wong G.K.-S."/>
            <person name="Yang H."/>
        </authorList>
    </citation>
    <scope>NUCLEOTIDE SEQUENCE [LARGE SCALE GENOMIC DNA]</scope>
    <source>
        <strain>cv. 93-11</strain>
    </source>
</reference>
<reference key="3">
    <citation type="journal article" date="2007" name="Proc. Natl. Acad. Sci. U.S.A.">
        <title>Following evolution's lead to a single residue switch for diterpene synthase product outcome.</title>
        <authorList>
            <person name="Xu M."/>
            <person name="Wilderman P.R."/>
            <person name="Peters R.J."/>
        </authorList>
    </citation>
    <scope>FUNCTION</scope>
    <scope>CATALYTIC ACTIVITY</scope>
    <scope>MUTAGENESIS OF VAL-661; ILE-664 AND ILE-718</scope>
</reference>
<keyword id="KW-0456">Lyase</keyword>
<keyword id="KW-0460">Magnesium</keyword>
<keyword id="KW-0479">Metal-binding</keyword>
<keyword id="KW-0611">Plant defense</keyword>
<keyword id="KW-1185">Reference proteome</keyword>
<gene>
    <name evidence="3" type="primary">KSL5</name>
    <name evidence="5" type="ORF">OsI_007599</name>
    <name evidence="5" type="ORF">OsI_07744</name>
</gene>
<dbReference type="EC" id="4.2.3.103" evidence="2"/>
<dbReference type="EMBL" id="DQ823352">
    <property type="protein sequence ID" value="ABH10732.1"/>
    <property type="molecule type" value="mRNA"/>
</dbReference>
<dbReference type="EMBL" id="CM000127">
    <property type="protein sequence ID" value="EEC73447.1"/>
    <property type="status" value="ALT_SEQ"/>
    <property type="molecule type" value="Genomic_DNA"/>
</dbReference>
<dbReference type="SMR" id="A4KAG7"/>
<dbReference type="STRING" id="39946.A4KAG7"/>
<dbReference type="KEGG" id="ag:ABH10732"/>
<dbReference type="BioCyc" id="MetaCyc:MONOMER-18622"/>
<dbReference type="BRENDA" id="4.2.3.103">
    <property type="organism ID" value="11590"/>
</dbReference>
<dbReference type="UniPathway" id="UPA00213"/>
<dbReference type="Proteomes" id="UP000007015">
    <property type="component" value="Chromosome 2"/>
</dbReference>
<dbReference type="GO" id="GO:0000287">
    <property type="term" value="F:magnesium ion binding"/>
    <property type="evidence" value="ECO:0007669"/>
    <property type="project" value="InterPro"/>
</dbReference>
<dbReference type="GO" id="GO:0010333">
    <property type="term" value="F:terpene synthase activity"/>
    <property type="evidence" value="ECO:0007669"/>
    <property type="project" value="InterPro"/>
</dbReference>
<dbReference type="GO" id="GO:0006952">
    <property type="term" value="P:defense response"/>
    <property type="evidence" value="ECO:0007669"/>
    <property type="project" value="UniProtKB-KW"/>
</dbReference>
<dbReference type="GO" id="GO:0016102">
    <property type="term" value="P:diterpenoid biosynthetic process"/>
    <property type="evidence" value="ECO:0007669"/>
    <property type="project" value="TreeGrafter"/>
</dbReference>
<dbReference type="FunFam" id="1.50.10.160:FF:000002">
    <property type="entry name" value="cis-abienol synthase, chloroplastic"/>
    <property type="match status" value="1"/>
</dbReference>
<dbReference type="FunFam" id="1.50.10.130:FF:000003">
    <property type="entry name" value="Ent-cassa-12,15-diene synthase"/>
    <property type="match status" value="1"/>
</dbReference>
<dbReference type="FunFam" id="1.10.600.10:FF:000005">
    <property type="entry name" value="Ent-kaur-16-ene synthase, chloroplastic"/>
    <property type="match status" value="1"/>
</dbReference>
<dbReference type="Gene3D" id="1.50.10.160">
    <property type="match status" value="1"/>
</dbReference>
<dbReference type="Gene3D" id="1.10.600.10">
    <property type="entry name" value="Farnesyl Diphosphate Synthase"/>
    <property type="match status" value="1"/>
</dbReference>
<dbReference type="Gene3D" id="1.50.10.130">
    <property type="entry name" value="Terpene synthase, N-terminal domain"/>
    <property type="match status" value="1"/>
</dbReference>
<dbReference type="InterPro" id="IPR008949">
    <property type="entry name" value="Isoprenoid_synthase_dom_sf"/>
</dbReference>
<dbReference type="InterPro" id="IPR001906">
    <property type="entry name" value="Terpene_synth_N"/>
</dbReference>
<dbReference type="InterPro" id="IPR036965">
    <property type="entry name" value="Terpene_synth_N_sf"/>
</dbReference>
<dbReference type="InterPro" id="IPR050148">
    <property type="entry name" value="Terpene_synthase-like"/>
</dbReference>
<dbReference type="InterPro" id="IPR005630">
    <property type="entry name" value="Terpene_synthase_metal-bd"/>
</dbReference>
<dbReference type="InterPro" id="IPR008930">
    <property type="entry name" value="Terpenoid_cyclase/PrenylTrfase"/>
</dbReference>
<dbReference type="PANTHER" id="PTHR31739">
    <property type="entry name" value="ENT-COPALYL DIPHOSPHATE SYNTHASE, CHLOROPLASTIC"/>
    <property type="match status" value="1"/>
</dbReference>
<dbReference type="PANTHER" id="PTHR31739:SF17">
    <property type="entry name" value="ENT-SANDARACOPIMARA-8(14),15-DIENE SYNTHASE, CHLOROPLASTIC"/>
    <property type="match status" value="1"/>
</dbReference>
<dbReference type="Pfam" id="PF01397">
    <property type="entry name" value="Terpene_synth"/>
    <property type="match status" value="1"/>
</dbReference>
<dbReference type="Pfam" id="PF03936">
    <property type="entry name" value="Terpene_synth_C"/>
    <property type="match status" value="1"/>
</dbReference>
<dbReference type="SFLD" id="SFLDG01014">
    <property type="entry name" value="Terpene_Cyclase_Like_1_N-term"/>
    <property type="match status" value="1"/>
</dbReference>
<dbReference type="SUPFAM" id="SSF48239">
    <property type="entry name" value="Terpenoid cyclases/Protein prenyltransferases"/>
    <property type="match status" value="2"/>
</dbReference>
<dbReference type="SUPFAM" id="SSF48576">
    <property type="entry name" value="Terpenoid synthases"/>
    <property type="match status" value="1"/>
</dbReference>
<name>KSL5_ORYSI</name>
<organism>
    <name type="scientific">Oryza sativa subsp. indica</name>
    <name type="common">Rice</name>
    <dbReference type="NCBI Taxonomy" id="39946"/>
    <lineage>
        <taxon>Eukaryota</taxon>
        <taxon>Viridiplantae</taxon>
        <taxon>Streptophyta</taxon>
        <taxon>Embryophyta</taxon>
        <taxon>Tracheophyta</taxon>
        <taxon>Spermatophyta</taxon>
        <taxon>Magnoliopsida</taxon>
        <taxon>Liliopsida</taxon>
        <taxon>Poales</taxon>
        <taxon>Poaceae</taxon>
        <taxon>BOP clade</taxon>
        <taxon>Oryzoideae</taxon>
        <taxon>Oryzeae</taxon>
        <taxon>Oryzinae</taxon>
        <taxon>Oryza</taxon>
        <taxon>Oryza sativa</taxon>
    </lineage>
</organism>
<feature type="chain" id="PRO_0000372318" description="Ent-isokaur-15-ene synthase">
    <location>
        <begin position="1"/>
        <end position="821"/>
    </location>
</feature>
<feature type="short sequence motif" description="DDXXD motif" evidence="4">
    <location>
        <begin position="556"/>
        <end position="560"/>
    </location>
</feature>
<feature type="binding site" evidence="1">
    <location>
        <position position="556"/>
    </location>
    <ligand>
        <name>Mg(2+)</name>
        <dbReference type="ChEBI" id="CHEBI:18420"/>
        <label>1</label>
    </ligand>
</feature>
<feature type="binding site" evidence="1">
    <location>
        <position position="556"/>
    </location>
    <ligand>
        <name>Mg(2+)</name>
        <dbReference type="ChEBI" id="CHEBI:18420"/>
        <label>2</label>
    </ligand>
</feature>
<feature type="binding site" evidence="1">
    <location>
        <position position="560"/>
    </location>
    <ligand>
        <name>Mg(2+)</name>
        <dbReference type="ChEBI" id="CHEBI:18420"/>
        <label>1</label>
    </ligand>
</feature>
<feature type="binding site" evidence="1">
    <location>
        <position position="560"/>
    </location>
    <ligand>
        <name>Mg(2+)</name>
        <dbReference type="ChEBI" id="CHEBI:18420"/>
        <label>2</label>
    </ligand>
</feature>
<feature type="binding site" evidence="1">
    <location>
        <position position="701"/>
    </location>
    <ligand>
        <name>Mg(2+)</name>
        <dbReference type="ChEBI" id="CHEBI:18420"/>
        <label>3</label>
    </ligand>
</feature>
<feature type="binding site" evidence="1">
    <location>
        <position position="705"/>
    </location>
    <ligand>
        <name>Mg(2+)</name>
        <dbReference type="ChEBI" id="CHEBI:18420"/>
        <label>3</label>
    </ligand>
</feature>
<feature type="binding site" evidence="1">
    <location>
        <position position="709"/>
    </location>
    <ligand>
        <name>Mg(2+)</name>
        <dbReference type="ChEBI" id="CHEBI:18420"/>
        <label>3</label>
    </ligand>
</feature>
<feature type="mutagenesis site" description="No effect on the catalytic activity." evidence="2">
    <original>V</original>
    <variation>L</variation>
    <location>
        <position position="661"/>
    </location>
</feature>
<feature type="mutagenesis site" description="Changes catalytic activity. Converts ent-copalyl diphosphate to ent-pimara-8(14),15-diene and diphosphate." evidence="2">
    <original>I</original>
    <variation>T</variation>
    <location>
        <position position="664"/>
    </location>
</feature>
<feature type="mutagenesis site" description="No effect on the catalytic activity." evidence="2">
    <original>I</original>
    <variation>V</variation>
    <location>
        <position position="718"/>
    </location>
</feature>
<accession>A4KAG7</accession>
<accession>A2X6A6</accession>
<accession>B8AEA0</accession>